<reference key="1">
    <citation type="journal article" date="1989" name="Proc. Natl. Acad. Sci. U.S.A.">
        <title>Isolation, partial amino acid sequence, and immunohistochemical localization of a brain-specific calcium-binding protein.</title>
        <authorList>
            <person name="Winsky L."/>
            <person name="Nakata H."/>
            <person name="Martin B.M."/>
            <person name="Jacobowitz D.M."/>
        </authorList>
    </citation>
    <scope>PROTEIN SEQUENCE</scope>
    <source>
        <tissue>Brain</tissue>
    </source>
</reference>
<feature type="chain" id="PRO_0000073482" description="Protein 10">
    <location>
        <begin position="1" status="less than"/>
        <end position="92" status="greater than"/>
    </location>
</feature>
<feature type="domain" description="EF-hand" evidence="1">
    <location>
        <begin position="18"/>
        <end position="29"/>
    </location>
</feature>
<feature type="non-consecutive residues" evidence="2">
    <location>
        <begin position="17"/>
        <end position="18"/>
    </location>
</feature>
<feature type="non-consecutive residues" evidence="2">
    <location>
        <begin position="27"/>
        <end position="28"/>
    </location>
</feature>
<feature type="non-consecutive residues" evidence="2">
    <location>
        <begin position="41"/>
        <end position="42"/>
    </location>
</feature>
<feature type="non-consecutive residues" evidence="2">
    <location>
        <begin position="76"/>
        <end position="77"/>
    </location>
</feature>
<feature type="non-consecutive residues" evidence="2">
    <location>
        <begin position="82"/>
        <end position="83"/>
    </location>
</feature>
<feature type="non-terminal residue">
    <location>
        <position position="1"/>
    </location>
</feature>
<feature type="non-terminal residue">
    <location>
        <position position="92"/>
    </location>
</feature>
<organism>
    <name type="scientific">Cavia porcellus</name>
    <name type="common">Guinea pig</name>
    <dbReference type="NCBI Taxonomy" id="10141"/>
    <lineage>
        <taxon>Eukaryota</taxon>
        <taxon>Metazoa</taxon>
        <taxon>Chordata</taxon>
        <taxon>Craniata</taxon>
        <taxon>Vertebrata</taxon>
        <taxon>Euteleostomi</taxon>
        <taxon>Mammalia</taxon>
        <taxon>Eutheria</taxon>
        <taxon>Euarchontoglires</taxon>
        <taxon>Glires</taxon>
        <taxon>Rodentia</taxon>
        <taxon>Hystricomorpha</taxon>
        <taxon>Caviidae</taxon>
        <taxon>Cavia</taxon>
    </lineage>
</organism>
<accession>P20658</accession>
<proteinExistence type="evidence at protein level"/>
<name>PR10_CAVPO</name>
<evidence type="ECO:0000255" key="1">
    <source>
        <dbReference type="PROSITE-ProRule" id="PRU00448"/>
    </source>
</evidence>
<evidence type="ECO:0000305" key="2"/>
<dbReference type="PIR" id="A34520">
    <property type="entry name" value="A34520"/>
</dbReference>
<dbReference type="InParanoid" id="P20658"/>
<dbReference type="Proteomes" id="UP000005447">
    <property type="component" value="Unassembled WGS sequence"/>
</dbReference>
<dbReference type="GO" id="GO:0005829">
    <property type="term" value="C:cytosol"/>
    <property type="evidence" value="ECO:0007669"/>
    <property type="project" value="TreeGrafter"/>
</dbReference>
<dbReference type="GO" id="GO:0030425">
    <property type="term" value="C:dendrite"/>
    <property type="evidence" value="ECO:0007669"/>
    <property type="project" value="TreeGrafter"/>
</dbReference>
<dbReference type="GO" id="GO:0005634">
    <property type="term" value="C:nucleus"/>
    <property type="evidence" value="ECO:0007669"/>
    <property type="project" value="TreeGrafter"/>
</dbReference>
<dbReference type="GO" id="GO:0043195">
    <property type="term" value="C:terminal bouton"/>
    <property type="evidence" value="ECO:0007669"/>
    <property type="project" value="TreeGrafter"/>
</dbReference>
<dbReference type="GO" id="GO:0005509">
    <property type="term" value="F:calcium ion binding"/>
    <property type="evidence" value="ECO:0007669"/>
    <property type="project" value="InterPro"/>
</dbReference>
<dbReference type="GO" id="GO:1900271">
    <property type="term" value="P:regulation of long-term synaptic potentiation"/>
    <property type="evidence" value="ECO:0007669"/>
    <property type="project" value="TreeGrafter"/>
</dbReference>
<dbReference type="GO" id="GO:0099509">
    <property type="term" value="P:regulation of presynaptic cytosolic calcium ion concentration"/>
    <property type="evidence" value="ECO:0007669"/>
    <property type="project" value="TreeGrafter"/>
</dbReference>
<dbReference type="Gene3D" id="1.10.238.10">
    <property type="entry name" value="EF-hand"/>
    <property type="match status" value="1"/>
</dbReference>
<dbReference type="InterPro" id="IPR051001">
    <property type="entry name" value="Calbindin_Ca-bind"/>
</dbReference>
<dbReference type="InterPro" id="IPR011992">
    <property type="entry name" value="EF-hand-dom_pair"/>
</dbReference>
<dbReference type="InterPro" id="IPR002048">
    <property type="entry name" value="EF_hand_dom"/>
</dbReference>
<dbReference type="PANTHER" id="PTHR19972">
    <property type="entry name" value="CALBINDIN"/>
    <property type="match status" value="1"/>
</dbReference>
<dbReference type="PANTHER" id="PTHR19972:SF4">
    <property type="entry name" value="CALRETININ"/>
    <property type="match status" value="1"/>
</dbReference>
<dbReference type="SUPFAM" id="SSF47473">
    <property type="entry name" value="EF-hand"/>
    <property type="match status" value="1"/>
</dbReference>
<dbReference type="PROSITE" id="PS50222">
    <property type="entry name" value="EF_HAND_2"/>
    <property type="match status" value="1"/>
</dbReference>
<sequence>EIWKHFDADENGYIEGKFMQKYDKNSDQHVGSSAEFMEAWRDMSRLLPVQENFLLKFQGMKLTSEEFNAIFTFYDKNEPAILEMNIQQLWNY</sequence>
<protein>
    <recommendedName>
        <fullName>Protein 10</fullName>
    </recommendedName>
    <alternativeName>
        <fullName>29 kDa brain-specific calcium-binding protein</fullName>
    </alternativeName>
</protein>
<keyword id="KW-0106">Calcium</keyword>
<keyword id="KW-0903">Direct protein sequencing</keyword>
<keyword id="KW-1185">Reference proteome</keyword>
<comment type="tissue specificity">
    <text>Brain.</text>
</comment>
<comment type="miscellaneous">
    <text>Binds calcium.</text>
</comment>
<comment type="similarity">
    <text evidence="2">Belongs to the calbindin family.</text>
</comment>